<dbReference type="EC" id="1.17.4.1"/>
<dbReference type="EMBL" id="AJ224870">
    <property type="protein sequence ID" value="CAA12167.1"/>
    <property type="molecule type" value="Genomic_DNA"/>
</dbReference>
<dbReference type="SMR" id="O54196"/>
<dbReference type="STRING" id="1901.BB341_05480"/>
<dbReference type="eggNOG" id="COG0209">
    <property type="taxonomic scope" value="Bacteria"/>
</dbReference>
<dbReference type="GO" id="GO:0031419">
    <property type="term" value="F:cobalamin binding"/>
    <property type="evidence" value="ECO:0007669"/>
    <property type="project" value="UniProtKB-KW"/>
</dbReference>
<dbReference type="GO" id="GO:0050897">
    <property type="term" value="F:cobalt ion binding"/>
    <property type="evidence" value="ECO:0007669"/>
    <property type="project" value="InterPro"/>
</dbReference>
<dbReference type="GO" id="GO:0000166">
    <property type="term" value="F:nucleotide binding"/>
    <property type="evidence" value="ECO:0007669"/>
    <property type="project" value="UniProtKB-KW"/>
</dbReference>
<dbReference type="GO" id="GO:0004748">
    <property type="term" value="F:ribonucleoside-diphosphate reductase activity, thioredoxin disulfide as acceptor"/>
    <property type="evidence" value="ECO:0007669"/>
    <property type="project" value="UniProtKB-EC"/>
</dbReference>
<dbReference type="GO" id="GO:0071897">
    <property type="term" value="P:DNA biosynthetic process"/>
    <property type="evidence" value="ECO:0007669"/>
    <property type="project" value="UniProtKB-KW"/>
</dbReference>
<dbReference type="CDD" id="cd02888">
    <property type="entry name" value="RNR_II_dimer"/>
    <property type="match status" value="1"/>
</dbReference>
<dbReference type="FunFam" id="3.20.70.20:FF:000007">
    <property type="entry name" value="Vitamin B12-dependent ribonucleotide reductase"/>
    <property type="match status" value="1"/>
</dbReference>
<dbReference type="Gene3D" id="3.20.70.20">
    <property type="match status" value="1"/>
</dbReference>
<dbReference type="InterPro" id="IPR050862">
    <property type="entry name" value="RdRp_reductase_class-2"/>
</dbReference>
<dbReference type="InterPro" id="IPR013678">
    <property type="entry name" value="RNR_2_N"/>
</dbReference>
<dbReference type="InterPro" id="IPR000788">
    <property type="entry name" value="RNR_lg_C"/>
</dbReference>
<dbReference type="InterPro" id="IPR013344">
    <property type="entry name" value="RNR_NrdJ/NrdZ"/>
</dbReference>
<dbReference type="InterPro" id="IPR024434">
    <property type="entry name" value="TSCPD_dom"/>
</dbReference>
<dbReference type="NCBIfam" id="TIGR02504">
    <property type="entry name" value="NrdJ_Z"/>
    <property type="match status" value="1"/>
</dbReference>
<dbReference type="NCBIfam" id="NF005122">
    <property type="entry name" value="PRK06556.1"/>
    <property type="match status" value="1"/>
</dbReference>
<dbReference type="PANTHER" id="PTHR43371:SF1">
    <property type="entry name" value="RIBONUCLEOSIDE-DIPHOSPHATE REDUCTASE"/>
    <property type="match status" value="1"/>
</dbReference>
<dbReference type="PANTHER" id="PTHR43371">
    <property type="entry name" value="VITAMIN B12-DEPENDENT RIBONUCLEOTIDE REDUCTASE"/>
    <property type="match status" value="1"/>
</dbReference>
<dbReference type="Pfam" id="PF08471">
    <property type="entry name" value="Ribonuc_red_2_N"/>
    <property type="match status" value="1"/>
</dbReference>
<dbReference type="Pfam" id="PF02867">
    <property type="entry name" value="Ribonuc_red_lgC"/>
    <property type="match status" value="1"/>
</dbReference>
<dbReference type="Pfam" id="PF12637">
    <property type="entry name" value="TSCPD"/>
    <property type="match status" value="1"/>
</dbReference>
<dbReference type="PRINTS" id="PR01183">
    <property type="entry name" value="RIBORDTASEM1"/>
</dbReference>
<dbReference type="SUPFAM" id="SSF51998">
    <property type="entry name" value="PFL-like glycyl radical enzymes"/>
    <property type="match status" value="1"/>
</dbReference>
<feature type="chain" id="PRO_0000229028" description="Vitamin B12-dependent ribonucleotide reductase">
    <location>
        <begin position="1"/>
        <end position="961"/>
    </location>
</feature>
<feature type="region of interest" description="Disordered" evidence="2">
    <location>
        <begin position="1"/>
        <end position="23"/>
    </location>
</feature>
<feature type="active site" description="Proton acceptor" evidence="1">
    <location>
        <position position="364"/>
    </location>
</feature>
<feature type="active site" description="Cysteine radical intermediate" evidence="1">
    <location>
        <position position="366"/>
    </location>
</feature>
<feature type="active site" description="Proton acceptor" evidence="1">
    <location>
        <position position="368"/>
    </location>
</feature>
<feature type="binding site" evidence="1">
    <location>
        <position position="143"/>
    </location>
    <ligand>
        <name>substrate</name>
    </ligand>
</feature>
<feature type="binding site" evidence="1">
    <location>
        <begin position="159"/>
        <end position="160"/>
    </location>
    <ligand>
        <name>substrate</name>
    </ligand>
</feature>
<feature type="binding site" evidence="1">
    <location>
        <position position="188"/>
    </location>
    <ligand>
        <name>substrate</name>
    </ligand>
</feature>
<feature type="binding site" evidence="1">
    <location>
        <begin position="364"/>
        <end position="368"/>
    </location>
    <ligand>
        <name>substrate</name>
    </ligand>
</feature>
<feature type="binding site" evidence="1">
    <location>
        <begin position="554"/>
        <end position="558"/>
    </location>
    <ligand>
        <name>substrate</name>
    </ligand>
</feature>
<feature type="disulfide bond" description="Redox-active" evidence="1">
    <location>
        <begin position="160"/>
        <end position="377"/>
    </location>
</feature>
<keyword id="KW-0846">Cobalamin</keyword>
<keyword id="KW-0170">Cobalt</keyword>
<keyword id="KW-1015">Disulfide bond</keyword>
<keyword id="KW-0237">DNA synthesis</keyword>
<keyword id="KW-0547">Nucleotide-binding</keyword>
<keyword id="KW-0560">Oxidoreductase</keyword>
<evidence type="ECO:0000250" key="1"/>
<evidence type="ECO:0000256" key="2">
    <source>
        <dbReference type="SAM" id="MobiDB-lite"/>
    </source>
</evidence>
<evidence type="ECO:0000305" key="3"/>
<gene>
    <name type="primary">nrdJ</name>
</gene>
<reference key="1">
    <citation type="journal article" date="2002" name="Microbiology">
        <title>Streptomyces spp. contain class Ia and class II ribonucleotide reductases: expression analysis of the genes in vegetative growth.</title>
        <authorList>
            <person name="Borovok I."/>
            <person name="Kreisberg-Zakarin R."/>
            <person name="Yanko M."/>
            <person name="Schreiber R."/>
            <person name="Myslovati M."/>
            <person name="Aaslund F."/>
            <person name="Holmgren A."/>
            <person name="Cohen G."/>
            <person name="Aharonowitz Y."/>
        </authorList>
    </citation>
    <scope>NUCLEOTIDE SEQUENCE [GENOMIC DNA]</scope>
    <source>
        <strain>ATCC 27064 / DSM 738 / JCM 4710 / NBRC 13307 / NCIMB 12785 / NRRL 3585 / VKM Ac-602</strain>
    </source>
</reference>
<comment type="function">
    <text>Catalyzes the reduction of ribonucleotides to deoxyribonucleotides. May function to provide a pool of deoxyribonucleotide precursors for DNA repair during oxygen limitation and/or for immediate growth after restoration of oxygen.</text>
</comment>
<comment type="catalytic activity">
    <reaction>
        <text>a 2'-deoxyribonucleoside 5'-diphosphate + [thioredoxin]-disulfide + H2O = a ribonucleoside 5'-diphosphate + [thioredoxin]-dithiol</text>
        <dbReference type="Rhea" id="RHEA:23252"/>
        <dbReference type="Rhea" id="RHEA-COMP:10698"/>
        <dbReference type="Rhea" id="RHEA-COMP:10700"/>
        <dbReference type="ChEBI" id="CHEBI:15377"/>
        <dbReference type="ChEBI" id="CHEBI:29950"/>
        <dbReference type="ChEBI" id="CHEBI:50058"/>
        <dbReference type="ChEBI" id="CHEBI:57930"/>
        <dbReference type="ChEBI" id="CHEBI:73316"/>
        <dbReference type="EC" id="1.17.4.1"/>
    </reaction>
</comment>
<comment type="cofactor">
    <cofactor evidence="3">
        <name>adenosylcob(III)alamin</name>
        <dbReference type="ChEBI" id="CHEBI:18408"/>
    </cofactor>
    <text evidence="3">5'-deoxyadenosylcobalamine (coenzyme B12).</text>
</comment>
<comment type="subunit">
    <text>Homotetramer.</text>
</comment>
<comment type="developmental stage">
    <text>Expressed during the exponential phase of growth.</text>
</comment>
<comment type="similarity">
    <text evidence="3">Belongs to the ribonucleoside diphosphate reductase class-2 family.</text>
</comment>
<protein>
    <recommendedName>
        <fullName>Vitamin B12-dependent ribonucleotide reductase</fullName>
        <ecNumber>1.17.4.1</ecNumber>
    </recommendedName>
    <alternativeName>
        <fullName>Ribonucleoside-diphosphate reductase NrdJ</fullName>
    </alternativeName>
</protein>
<name>NRDJ_STRCL</name>
<organism>
    <name type="scientific">Streptomyces clavuligerus</name>
    <dbReference type="NCBI Taxonomy" id="1901"/>
    <lineage>
        <taxon>Bacteria</taxon>
        <taxon>Bacillati</taxon>
        <taxon>Actinomycetota</taxon>
        <taxon>Actinomycetes</taxon>
        <taxon>Kitasatosporales</taxon>
        <taxon>Streptomycetaceae</taxon>
        <taxon>Streptomyces</taxon>
    </lineage>
</organism>
<accession>O54196</accession>
<proteinExistence type="evidence at transcript level"/>
<sequence length="961" mass="104791">MTETTSGPARGSRTKGTKATKGLRIERVHTTPGVHPYDEVVWERRDVVMTNWRDGSVNFEQRGVEFPDFWSVNAVNIVTSKYFRGAVGTPQRETGLKQLIDRIVKTYRKAGEEYKYFASPADAEIFEHELAYALLHQIFSFNSPVWFNVGTPQPQQVSACFILSVDDSMESILDWYKEEGMIFKGGSGAGLNLSRIRSSKELLSSGGNASGPVSFMRGADASAGTIKSGGATRRAAKMVILDVDHPDIEGFIETKVKEEEKIRALRDAGFDMDLGGDDITSVQYQNANNSVRVNDEFMRAVESGSAFGLRARMTGEIIEQVDAKALFRKMAQAAWACADPGIQYDDTINRWHTCPESGRINGSNPCSEYMHLDNTSCNLASLNLMKFLTDDGEGNQSFDVERFAKVVELVITAMDISICFADFPTQKIGENTRAFRQLGIGYANLGALLMATGHAYDSDGGRAIAGAISSLMTGTSYRRSAELAAVVGPYDGYARNAAPHNQVMRQHADANDTAVRMDDLDTPIWAAATETWQDVLRLGEKNGFRNAQASVIAPTGTIGLAMSCDTTGLEPDLALVKFKKLVGGGSMQIVNGTVPQALRRLGYQAEQIEAIVEHIAEHGNVLDAPGLKTEHYKVFDCAMGERSISAMGHVRMMAAIQPWISGALSKTVNMPESATVEEVEEIYFEAWKMGVKALAIYRDNCKVGQPLSAKTKEKEQDGIAEKTEDTIRAAVEKVIEYRPVRKRLPKGRPGITTSFTVGGAEGYMTANSYPDDGLGEVFLKMSKQGSTLAGMMDAFSIAVSVGLQYGVPLETYVSKFTNMRFEPAGMTDDPDVRMAQSIVDNIFRRLALDFLPFETRSALGIHSAEERQRHLDTGSYEQVIEEDELDVEGLAQSAPRQQIPAVPAAPAEIPAPKQAHTSAELVEMQLGISADAPLCFSCGTKMQRAGSCYICEGCGSTSGCS</sequence>